<name>RR3_NEPOL</name>
<gene>
    <name type="primary">rps3</name>
</gene>
<proteinExistence type="inferred from homology"/>
<sequence>MGQKIHPLGFRLGITQQHRSTWFAPRKLYVSWIHEERQLRDYLKTRLADAGVANVQLTRQSDRIEVEIHTACPGAIVGRTGQGLEILREDIQKRLPKVRRVIVHVVEIANPDAQAVLIGGIIAKQLEERIPFRRAVRQAVQRAMRAPGVEGIKIEVSGRLNGAEIARSEWVREGRVPLHTLRADVDYCDCTAQTIYGVLGIKVWIFRGEIRPVRQVLAPGT</sequence>
<accession>Q9TL20</accession>
<evidence type="ECO:0000250" key="1"/>
<evidence type="ECO:0000305" key="2"/>
<organism>
    <name type="scientific">Nephroselmis olivacea</name>
    <name type="common">Green alga</name>
    <dbReference type="NCBI Taxonomy" id="31312"/>
    <lineage>
        <taxon>Eukaryota</taxon>
        <taxon>Viridiplantae</taxon>
        <taxon>Chlorophyta</taxon>
        <taxon>Nephroselmidophyceae</taxon>
        <taxon>Nephroselmidales</taxon>
        <taxon>Nephroselmidaceae</taxon>
        <taxon>Nephroselmis</taxon>
    </lineage>
</organism>
<reference key="1">
    <citation type="journal article" date="1999" name="Proc. Natl. Acad. Sci. U.S.A.">
        <title>The complete chloroplast DNA sequence of the green alga Nephroselmis olivacea: insights into the architecture of ancestral chloroplast genomes.</title>
        <authorList>
            <person name="Turmel M."/>
            <person name="Otis C."/>
            <person name="Lemieux C."/>
        </authorList>
    </citation>
    <scope>NUCLEOTIDE SEQUENCE [LARGE SCALE GENOMIC DNA]</scope>
    <source>
        <strain>NIES-484 / S-N-5-8</strain>
    </source>
</reference>
<feature type="chain" id="PRO_0000130290" description="Small ribosomal subunit protein uS3c">
    <location>
        <begin position="1"/>
        <end position="221"/>
    </location>
</feature>
<feature type="domain" description="KH type-2">
    <location>
        <begin position="39"/>
        <end position="109"/>
    </location>
</feature>
<comment type="subunit">
    <text evidence="1">Part of the 30S ribosomal subunit.</text>
</comment>
<comment type="subcellular location">
    <subcellularLocation>
        <location>Plastid</location>
        <location>Chloroplast</location>
    </subcellularLocation>
</comment>
<comment type="similarity">
    <text evidence="2">Belongs to the universal ribosomal protein uS3 family.</text>
</comment>
<geneLocation type="chloroplast"/>
<dbReference type="EMBL" id="AF137379">
    <property type="protein sequence ID" value="AAD54796.1"/>
    <property type="molecule type" value="Genomic_DNA"/>
</dbReference>
<dbReference type="RefSeq" id="NP_050825.1">
    <property type="nucleotide sequence ID" value="NC_000927.1"/>
</dbReference>
<dbReference type="SMR" id="Q9TL20"/>
<dbReference type="GeneID" id="801983"/>
<dbReference type="GO" id="GO:0009507">
    <property type="term" value="C:chloroplast"/>
    <property type="evidence" value="ECO:0007669"/>
    <property type="project" value="UniProtKB-SubCell"/>
</dbReference>
<dbReference type="GO" id="GO:0022627">
    <property type="term" value="C:cytosolic small ribosomal subunit"/>
    <property type="evidence" value="ECO:0007669"/>
    <property type="project" value="TreeGrafter"/>
</dbReference>
<dbReference type="GO" id="GO:0019843">
    <property type="term" value="F:rRNA binding"/>
    <property type="evidence" value="ECO:0007669"/>
    <property type="project" value="UniProtKB-UniRule"/>
</dbReference>
<dbReference type="GO" id="GO:0003735">
    <property type="term" value="F:structural constituent of ribosome"/>
    <property type="evidence" value="ECO:0007669"/>
    <property type="project" value="InterPro"/>
</dbReference>
<dbReference type="GO" id="GO:0006412">
    <property type="term" value="P:translation"/>
    <property type="evidence" value="ECO:0007669"/>
    <property type="project" value="UniProtKB-UniRule"/>
</dbReference>
<dbReference type="CDD" id="cd02412">
    <property type="entry name" value="KH-II_30S_S3"/>
    <property type="match status" value="1"/>
</dbReference>
<dbReference type="FunFam" id="3.30.300.20:FF:000001">
    <property type="entry name" value="30S ribosomal protein S3"/>
    <property type="match status" value="1"/>
</dbReference>
<dbReference type="Gene3D" id="3.30.300.20">
    <property type="match status" value="1"/>
</dbReference>
<dbReference type="Gene3D" id="3.30.1140.32">
    <property type="entry name" value="Ribosomal protein S3, C-terminal domain"/>
    <property type="match status" value="1"/>
</dbReference>
<dbReference type="HAMAP" id="MF_01309_B">
    <property type="entry name" value="Ribosomal_uS3_B"/>
    <property type="match status" value="1"/>
</dbReference>
<dbReference type="InterPro" id="IPR004087">
    <property type="entry name" value="KH_dom"/>
</dbReference>
<dbReference type="InterPro" id="IPR015946">
    <property type="entry name" value="KH_dom-like_a/b"/>
</dbReference>
<dbReference type="InterPro" id="IPR004044">
    <property type="entry name" value="KH_dom_type_2"/>
</dbReference>
<dbReference type="InterPro" id="IPR009019">
    <property type="entry name" value="KH_sf_prok-type"/>
</dbReference>
<dbReference type="InterPro" id="IPR036419">
    <property type="entry name" value="Ribosomal_S3_C_sf"/>
</dbReference>
<dbReference type="InterPro" id="IPR005704">
    <property type="entry name" value="Ribosomal_uS3_bac-typ"/>
</dbReference>
<dbReference type="InterPro" id="IPR001351">
    <property type="entry name" value="Ribosomal_uS3_C"/>
</dbReference>
<dbReference type="InterPro" id="IPR018280">
    <property type="entry name" value="Ribosomal_uS3_CS"/>
</dbReference>
<dbReference type="NCBIfam" id="TIGR01009">
    <property type="entry name" value="rpsC_bact"/>
    <property type="match status" value="1"/>
</dbReference>
<dbReference type="PANTHER" id="PTHR11760">
    <property type="entry name" value="30S/40S RIBOSOMAL PROTEIN S3"/>
    <property type="match status" value="1"/>
</dbReference>
<dbReference type="PANTHER" id="PTHR11760:SF19">
    <property type="entry name" value="SMALL RIBOSOMAL SUBUNIT PROTEIN US3C"/>
    <property type="match status" value="1"/>
</dbReference>
<dbReference type="Pfam" id="PF07650">
    <property type="entry name" value="KH_2"/>
    <property type="match status" value="1"/>
</dbReference>
<dbReference type="Pfam" id="PF00189">
    <property type="entry name" value="Ribosomal_S3_C"/>
    <property type="match status" value="1"/>
</dbReference>
<dbReference type="SMART" id="SM00322">
    <property type="entry name" value="KH"/>
    <property type="match status" value="1"/>
</dbReference>
<dbReference type="SUPFAM" id="SSF54814">
    <property type="entry name" value="Prokaryotic type KH domain (KH-domain type II)"/>
    <property type="match status" value="1"/>
</dbReference>
<dbReference type="SUPFAM" id="SSF54821">
    <property type="entry name" value="Ribosomal protein S3 C-terminal domain"/>
    <property type="match status" value="1"/>
</dbReference>
<dbReference type="PROSITE" id="PS50823">
    <property type="entry name" value="KH_TYPE_2"/>
    <property type="match status" value="1"/>
</dbReference>
<dbReference type="PROSITE" id="PS00548">
    <property type="entry name" value="RIBOSOMAL_S3"/>
    <property type="match status" value="1"/>
</dbReference>
<keyword id="KW-0150">Chloroplast</keyword>
<keyword id="KW-0934">Plastid</keyword>
<keyword id="KW-0687">Ribonucleoprotein</keyword>
<keyword id="KW-0689">Ribosomal protein</keyword>
<keyword id="KW-0694">RNA-binding</keyword>
<keyword id="KW-0699">rRNA-binding</keyword>
<protein>
    <recommendedName>
        <fullName evidence="2">Small ribosomal subunit protein uS3c</fullName>
    </recommendedName>
    <alternativeName>
        <fullName>30S ribosomal protein S3, chloroplastic</fullName>
    </alternativeName>
</protein>